<comment type="function">
    <text evidence="3">Hydrolyzes the sphingolipid ceramide into sphingosine and free fatty acid. Uses ceramide instead of phytoceramide as substrate.</text>
</comment>
<comment type="catalytic activity">
    <reaction>
        <text>an N-acylsphing-4-enine + H2O = sphing-4-enine + a fatty acid</text>
        <dbReference type="Rhea" id="RHEA:20856"/>
        <dbReference type="ChEBI" id="CHEBI:15377"/>
        <dbReference type="ChEBI" id="CHEBI:28868"/>
        <dbReference type="ChEBI" id="CHEBI:52639"/>
        <dbReference type="ChEBI" id="CHEBI:57756"/>
        <dbReference type="EC" id="3.5.1.23"/>
    </reaction>
</comment>
<comment type="activity regulation">
    <text evidence="3">Enhanced activity in the presence of calcium, magnesium, manganese and zinc ions, but inhibited activity in the presence of iron ion.</text>
</comment>
<comment type="biophysicochemical properties">
    <kinetics>
        <KM evidence="3">39.34 uM for D-erythro-C12-NBD-ceramide (at pH 5.7 and 37 degrees Celsius)</KM>
        <Vmax evidence="3">0.079 pmol/h/ug enzyme with D-erythro-C12-NBD-ceramide as substrate</Vmax>
    </kinetics>
    <phDependence>
        <text evidence="3">Optimum pH is 5.7-6.</text>
    </phDependence>
</comment>
<comment type="subcellular location">
    <subcellularLocation>
        <location evidence="1">Secreted</location>
    </subcellularLocation>
    <subcellularLocation>
        <location evidence="3">Endoplasmic reticulum</location>
    </subcellularLocation>
    <subcellularLocation>
        <location evidence="3">Golgi apparatus</location>
    </subcellularLocation>
</comment>
<comment type="alternative products">
    <event type="alternative splicing"/>
    <isoform>
        <id>Q0JL46-1</id>
        <name>1</name>
        <sequence type="displayed"/>
    </isoform>
    <text>A number of isoforms are produced. According to EST sequences.</text>
</comment>
<comment type="tissue specificity">
    <text evidence="3">Expressed in seedlings, with higher levels in roots than in shoots.</text>
</comment>
<comment type="similarity">
    <text evidence="4">Belongs to the neutral ceramidase family.</text>
</comment>
<comment type="sequence caution" evidence="4">
    <conflict type="erroneous gene model prediction">
        <sequence resource="EMBL-CDS" id="BAD61179"/>
    </conflict>
</comment>
<comment type="sequence caution" evidence="4">
    <conflict type="erroneous gene model prediction">
        <sequence resource="EMBL-CDS" id="EEE55011"/>
    </conflict>
</comment>
<sequence length="785" mass="86593">MEASSWLCYQARGFGSSRVWLWLLLALVLLNCSLVLSASPYLVGMGSFDITGPAADVNMMGYANTEQIASGIHFRLKSRAFIVAEPNGKRVVFVNIDACMASQIVTIKVLERLKARYGDLYNENNVAISGIHTHAGPGGYLQYVVYIVTSLGFVRQSFDVIVDGIEQSIVEAHNNLRPGKIFVNKGDLLDAGVNRSPSAYLNNPAEERSKYEYNVDKEMTLIKFVDDELGPVGSFNWFATHGTSMSRTNSLISGDNKGAAARFMEDWAEQMGLPKQSAHANSDDLRSLHKTSVLPRRVSTIIPEPNEITDDLIQLASSYEASGGRRLAGSSITRRIRSTQQNKPKFVSAFCQSNCGDVSPNVLGTFCIDTNLPCDFNHSTCNGKNELCYGRGPGYPDEFESTRVIGNRQFLKARDLFDSASEEIQGKIDYRHTYLDFSKLEVKVSTSAGGQQTVKTCPAAMGFAFAAGTTDGPGAFDFRQGDVKGNPFWKLVRNLLKTPGKDQVECHSPKPILLDTGEMKEPYDWAPAILPVQMIRIGQLVILCVPGEFTTMAGRRLRDAVKTVLTSGNSEFDKNIHVVLAGLTNSYSQYITTFEEYQIQRYEGASTLYGPHTLSAYIQEFQKLAMAMIANKEVPTNFQPPDMLDKQIGLLPGVVFDSTPLGVKFGDVNSDVPGNSTFNKGSTVNATFYSACPRNDLLTDGTFALVEKLDGNNNWVPVYDDDDWSLRFKWSRPARLSSRSFATLEWTVPEDAAAGVYRLRHFGASKPMFGSVRHFTGTSRAFAVR</sequence>
<accession>Q0JL46</accession>
<accession>A0A0P0V5E9</accession>
<accession>B9EY48</accession>
<accession>Q5ZE61</accession>
<gene>
    <name type="ordered locus">Os01g0624000</name>
    <name type="ordered locus">LOC_Os01g43520</name>
    <name type="ORF">OsJ_02661</name>
    <name type="ORF">P0501G01.30-1</name>
</gene>
<feature type="signal peptide" evidence="2">
    <location>
        <begin position="1"/>
        <end position="35"/>
    </location>
</feature>
<feature type="chain" id="PRO_0000403419" description="Neutral ceramidase">
    <location>
        <begin position="36"/>
        <end position="785"/>
    </location>
</feature>
<feature type="active site" description="Nucleophile" evidence="1">
    <location>
        <position position="359"/>
    </location>
</feature>
<feature type="glycosylation site" description="N-linked (GlcNAc...) asparagine" evidence="2">
    <location>
        <position position="31"/>
    </location>
</feature>
<feature type="glycosylation site" description="N-linked (GlcNAc...) asparagine" evidence="2">
    <location>
        <position position="377"/>
    </location>
</feature>
<feature type="glycosylation site" description="N-linked (GlcNAc...) asparagine" evidence="2">
    <location>
        <position position="675"/>
    </location>
</feature>
<feature type="glycosylation site" description="N-linked (GlcNAc...) asparagine" evidence="2">
    <location>
        <position position="685"/>
    </location>
</feature>
<protein>
    <recommendedName>
        <fullName>Neutral ceramidase</fullName>
        <shortName>N-CDase</shortName>
        <shortName>NCDase</shortName>
        <shortName>OsCDase</shortName>
        <ecNumber>3.5.1.23</ecNumber>
    </recommendedName>
    <alternativeName>
        <fullName>Acylsphingosine deacylase</fullName>
    </alternativeName>
    <alternativeName>
        <fullName>N-acylsphingosine amidohydrolase</fullName>
    </alternativeName>
</protein>
<evidence type="ECO:0000250" key="1"/>
<evidence type="ECO:0000255" key="2"/>
<evidence type="ECO:0000269" key="3">
    <source>
    </source>
</evidence>
<evidence type="ECO:0000305" key="4"/>
<dbReference type="EC" id="3.5.1.23"/>
<dbReference type="EMBL" id="EU422991">
    <property type="protein sequence ID" value="ACA49516.1"/>
    <property type="molecule type" value="mRNA"/>
</dbReference>
<dbReference type="EMBL" id="AP002819">
    <property type="protein sequence ID" value="BAD61179.1"/>
    <property type="status" value="ALT_SEQ"/>
    <property type="molecule type" value="Genomic_DNA"/>
</dbReference>
<dbReference type="EMBL" id="AP008207">
    <property type="protein sequence ID" value="BAF05532.1"/>
    <property type="molecule type" value="Genomic_DNA"/>
</dbReference>
<dbReference type="EMBL" id="AP014957">
    <property type="protein sequence ID" value="BAS73237.1"/>
    <property type="molecule type" value="Genomic_DNA"/>
</dbReference>
<dbReference type="EMBL" id="CM000138">
    <property type="protein sequence ID" value="EEE55011.1"/>
    <property type="status" value="ALT_SEQ"/>
    <property type="molecule type" value="Genomic_DNA"/>
</dbReference>
<dbReference type="EMBL" id="AK099625">
    <property type="protein sequence ID" value="BAG94227.1"/>
    <property type="molecule type" value="mRNA"/>
</dbReference>
<dbReference type="RefSeq" id="XP_015620868.1">
    <property type="nucleotide sequence ID" value="XM_015765382.1"/>
</dbReference>
<dbReference type="SMR" id="Q0JL46"/>
<dbReference type="FunCoup" id="Q0JL46">
    <property type="interactions" value="619"/>
</dbReference>
<dbReference type="STRING" id="39947.Q0JL46"/>
<dbReference type="PaxDb" id="39947-Q0JL46"/>
<dbReference type="EnsemblPlants" id="Os01t0624000-01">
    <molecule id="Q0JL46-1"/>
    <property type="protein sequence ID" value="Os01t0624000-01"/>
    <property type="gene ID" value="Os01g0624000"/>
</dbReference>
<dbReference type="EnsemblPlants" id="Os01t0624000-02">
    <molecule id="Q0JL46-1"/>
    <property type="protein sequence ID" value="Os01t0624000-02"/>
    <property type="gene ID" value="Os01g0624000"/>
</dbReference>
<dbReference type="Gramene" id="Os01t0624000-01">
    <molecule id="Q0JL46-1"/>
    <property type="protein sequence ID" value="Os01t0624000-01"/>
    <property type="gene ID" value="Os01g0624000"/>
</dbReference>
<dbReference type="Gramene" id="Os01t0624000-02">
    <molecule id="Q0JL46-1"/>
    <property type="protein sequence ID" value="Os01t0624000-02"/>
    <property type="gene ID" value="Os01g0624000"/>
</dbReference>
<dbReference type="KEGG" id="dosa:Os01g0624000"/>
<dbReference type="eggNOG" id="KOG2232">
    <property type="taxonomic scope" value="Eukaryota"/>
</dbReference>
<dbReference type="HOGENOM" id="CLU_011300_2_0_1"/>
<dbReference type="InParanoid" id="Q0JL46"/>
<dbReference type="OMA" id="GTTVQTC"/>
<dbReference type="OrthoDB" id="191371at2759"/>
<dbReference type="BioCyc" id="MetaCyc:MONOMER-15591"/>
<dbReference type="Proteomes" id="UP000000763">
    <property type="component" value="Chromosome 1"/>
</dbReference>
<dbReference type="Proteomes" id="UP000007752">
    <property type="component" value="Chromosome 1"/>
</dbReference>
<dbReference type="Proteomes" id="UP000059680">
    <property type="component" value="Chromosome 1"/>
</dbReference>
<dbReference type="ExpressionAtlas" id="Q0JL46">
    <property type="expression patterns" value="baseline and differential"/>
</dbReference>
<dbReference type="GO" id="GO:0005783">
    <property type="term" value="C:endoplasmic reticulum"/>
    <property type="evidence" value="ECO:0000314"/>
    <property type="project" value="CACAO"/>
</dbReference>
<dbReference type="GO" id="GO:0005576">
    <property type="term" value="C:extracellular region"/>
    <property type="evidence" value="ECO:0000318"/>
    <property type="project" value="GO_Central"/>
</dbReference>
<dbReference type="GO" id="GO:0005794">
    <property type="term" value="C:Golgi apparatus"/>
    <property type="evidence" value="ECO:0000314"/>
    <property type="project" value="CACAO"/>
</dbReference>
<dbReference type="GO" id="GO:0016020">
    <property type="term" value="C:membrane"/>
    <property type="evidence" value="ECO:0007669"/>
    <property type="project" value="GOC"/>
</dbReference>
<dbReference type="GO" id="GO:0017040">
    <property type="term" value="F:N-acylsphingosine amidohydrolase activity"/>
    <property type="evidence" value="ECO:0000318"/>
    <property type="project" value="GO_Central"/>
</dbReference>
<dbReference type="GO" id="GO:0046514">
    <property type="term" value="P:ceramide catabolic process"/>
    <property type="evidence" value="ECO:0000318"/>
    <property type="project" value="GO_Central"/>
</dbReference>
<dbReference type="GO" id="GO:0042759">
    <property type="term" value="P:long-chain fatty acid biosynthetic process"/>
    <property type="evidence" value="ECO:0000318"/>
    <property type="project" value="GO_Central"/>
</dbReference>
<dbReference type="GO" id="GO:0046512">
    <property type="term" value="P:sphingosine biosynthetic process"/>
    <property type="evidence" value="ECO:0000318"/>
    <property type="project" value="GO_Central"/>
</dbReference>
<dbReference type="FunFam" id="2.60.40.2300:FF:000002">
    <property type="entry name" value="Neutral/alkaline non-lysosomal ceramidase"/>
    <property type="match status" value="1"/>
</dbReference>
<dbReference type="Gene3D" id="2.60.40.2300">
    <property type="entry name" value="Neutral/alkaline non-lysosomal ceramidase, C-terminal domain"/>
    <property type="match status" value="1"/>
</dbReference>
<dbReference type="InterPro" id="IPR006823">
    <property type="entry name" value="Ceramidase_alk"/>
</dbReference>
<dbReference type="InterPro" id="IPR038445">
    <property type="entry name" value="NCDase_C_sf"/>
</dbReference>
<dbReference type="InterPro" id="IPR031331">
    <property type="entry name" value="NEUT/ALK_ceramidase_C"/>
</dbReference>
<dbReference type="InterPro" id="IPR031329">
    <property type="entry name" value="NEUT/ALK_ceramidase_N"/>
</dbReference>
<dbReference type="PANTHER" id="PTHR12670">
    <property type="entry name" value="CERAMIDASE"/>
    <property type="match status" value="1"/>
</dbReference>
<dbReference type="PANTHER" id="PTHR12670:SF1">
    <property type="entry name" value="NEUTRAL CERAMIDASE"/>
    <property type="match status" value="1"/>
</dbReference>
<dbReference type="Pfam" id="PF04734">
    <property type="entry name" value="Ceramidase_alk"/>
    <property type="match status" value="1"/>
</dbReference>
<dbReference type="Pfam" id="PF17048">
    <property type="entry name" value="Ceramidse_alk_C"/>
    <property type="match status" value="1"/>
</dbReference>
<name>NCASE_ORYSJ</name>
<organism>
    <name type="scientific">Oryza sativa subsp. japonica</name>
    <name type="common">Rice</name>
    <dbReference type="NCBI Taxonomy" id="39947"/>
    <lineage>
        <taxon>Eukaryota</taxon>
        <taxon>Viridiplantae</taxon>
        <taxon>Streptophyta</taxon>
        <taxon>Embryophyta</taxon>
        <taxon>Tracheophyta</taxon>
        <taxon>Spermatophyta</taxon>
        <taxon>Magnoliopsida</taxon>
        <taxon>Liliopsida</taxon>
        <taxon>Poales</taxon>
        <taxon>Poaceae</taxon>
        <taxon>BOP clade</taxon>
        <taxon>Oryzoideae</taxon>
        <taxon>Oryzeae</taxon>
        <taxon>Oryzinae</taxon>
        <taxon>Oryza</taxon>
        <taxon>Oryza sativa</taxon>
    </lineage>
</organism>
<proteinExistence type="evidence at protein level"/>
<reference key="1">
    <citation type="journal article" date="2008" name="Plant J.">
        <title>Molecular cloning and characterization of OsCDase, a ceramidase enzyme from rice.</title>
        <authorList>
            <person name="Pata M.O."/>
            <person name="Wu B.X."/>
            <person name="Bielawski J."/>
            <person name="Xiong T.C."/>
            <person name="Hannun Y.A."/>
            <person name="Ng C.K.-Y."/>
        </authorList>
    </citation>
    <scope>NUCLEOTIDE SEQUENCE [MRNA]</scope>
    <scope>FUNCTION</scope>
    <scope>BIOPHYSICOCHEMICAL PROPERTIES</scope>
    <scope>ACTIVITY REGULATION</scope>
    <scope>SUBCELLULAR LOCATION</scope>
    <scope>TISSUE SPECIFICITY</scope>
    <source>
        <strain>cv. Nipponbare</strain>
    </source>
</reference>
<reference key="2">
    <citation type="journal article" date="2002" name="Nature">
        <title>The genome sequence and structure of rice chromosome 1.</title>
        <authorList>
            <person name="Sasaki T."/>
            <person name="Matsumoto T."/>
            <person name="Yamamoto K."/>
            <person name="Sakata K."/>
            <person name="Baba T."/>
            <person name="Katayose Y."/>
            <person name="Wu J."/>
            <person name="Niimura Y."/>
            <person name="Cheng Z."/>
            <person name="Nagamura Y."/>
            <person name="Antonio B.A."/>
            <person name="Kanamori H."/>
            <person name="Hosokawa S."/>
            <person name="Masukawa M."/>
            <person name="Arikawa K."/>
            <person name="Chiden Y."/>
            <person name="Hayashi M."/>
            <person name="Okamoto M."/>
            <person name="Ando T."/>
            <person name="Aoki H."/>
            <person name="Arita K."/>
            <person name="Hamada M."/>
            <person name="Harada C."/>
            <person name="Hijishita S."/>
            <person name="Honda M."/>
            <person name="Ichikawa Y."/>
            <person name="Idonuma A."/>
            <person name="Iijima M."/>
            <person name="Ikeda M."/>
            <person name="Ikeno M."/>
            <person name="Ito S."/>
            <person name="Ito T."/>
            <person name="Ito Y."/>
            <person name="Ito Y."/>
            <person name="Iwabuchi A."/>
            <person name="Kamiya K."/>
            <person name="Karasawa W."/>
            <person name="Katagiri S."/>
            <person name="Kikuta A."/>
            <person name="Kobayashi N."/>
            <person name="Kono I."/>
            <person name="Machita K."/>
            <person name="Maehara T."/>
            <person name="Mizuno H."/>
            <person name="Mizubayashi T."/>
            <person name="Mukai Y."/>
            <person name="Nagasaki H."/>
            <person name="Nakashima M."/>
            <person name="Nakama Y."/>
            <person name="Nakamichi Y."/>
            <person name="Nakamura M."/>
            <person name="Namiki N."/>
            <person name="Negishi M."/>
            <person name="Ohta I."/>
            <person name="Ono N."/>
            <person name="Saji S."/>
            <person name="Sakai K."/>
            <person name="Shibata M."/>
            <person name="Shimokawa T."/>
            <person name="Shomura A."/>
            <person name="Song J."/>
            <person name="Takazaki Y."/>
            <person name="Terasawa K."/>
            <person name="Tsuji K."/>
            <person name="Waki K."/>
            <person name="Yamagata H."/>
            <person name="Yamane H."/>
            <person name="Yoshiki S."/>
            <person name="Yoshihara R."/>
            <person name="Yukawa K."/>
            <person name="Zhong H."/>
            <person name="Iwama H."/>
            <person name="Endo T."/>
            <person name="Ito H."/>
            <person name="Hahn J.H."/>
            <person name="Kim H.-I."/>
            <person name="Eun M.-Y."/>
            <person name="Yano M."/>
            <person name="Jiang J."/>
            <person name="Gojobori T."/>
        </authorList>
    </citation>
    <scope>NUCLEOTIDE SEQUENCE [LARGE SCALE GENOMIC DNA]</scope>
    <source>
        <strain>cv. Nipponbare</strain>
    </source>
</reference>
<reference key="3">
    <citation type="journal article" date="2005" name="Nature">
        <title>The map-based sequence of the rice genome.</title>
        <authorList>
            <consortium name="International rice genome sequencing project (IRGSP)"/>
        </authorList>
    </citation>
    <scope>NUCLEOTIDE SEQUENCE [LARGE SCALE GENOMIC DNA]</scope>
    <source>
        <strain>cv. Nipponbare</strain>
    </source>
</reference>
<reference key="4">
    <citation type="journal article" date="2008" name="Nucleic Acids Res.">
        <title>The rice annotation project database (RAP-DB): 2008 update.</title>
        <authorList>
            <consortium name="The rice annotation project (RAP)"/>
        </authorList>
    </citation>
    <scope>GENOME REANNOTATION</scope>
    <source>
        <strain>cv. Nipponbare</strain>
    </source>
</reference>
<reference key="5">
    <citation type="journal article" date="2013" name="Rice">
        <title>Improvement of the Oryza sativa Nipponbare reference genome using next generation sequence and optical map data.</title>
        <authorList>
            <person name="Kawahara Y."/>
            <person name="de la Bastide M."/>
            <person name="Hamilton J.P."/>
            <person name="Kanamori H."/>
            <person name="McCombie W.R."/>
            <person name="Ouyang S."/>
            <person name="Schwartz D.C."/>
            <person name="Tanaka T."/>
            <person name="Wu J."/>
            <person name="Zhou S."/>
            <person name="Childs K.L."/>
            <person name="Davidson R.M."/>
            <person name="Lin H."/>
            <person name="Quesada-Ocampo L."/>
            <person name="Vaillancourt B."/>
            <person name="Sakai H."/>
            <person name="Lee S.S."/>
            <person name="Kim J."/>
            <person name="Numa H."/>
            <person name="Itoh T."/>
            <person name="Buell C.R."/>
            <person name="Matsumoto T."/>
        </authorList>
    </citation>
    <scope>GENOME REANNOTATION</scope>
    <source>
        <strain>cv. Nipponbare</strain>
    </source>
</reference>
<reference key="6">
    <citation type="journal article" date="2005" name="PLoS Biol.">
        <title>The genomes of Oryza sativa: a history of duplications.</title>
        <authorList>
            <person name="Yu J."/>
            <person name="Wang J."/>
            <person name="Lin W."/>
            <person name="Li S."/>
            <person name="Li H."/>
            <person name="Zhou J."/>
            <person name="Ni P."/>
            <person name="Dong W."/>
            <person name="Hu S."/>
            <person name="Zeng C."/>
            <person name="Zhang J."/>
            <person name="Zhang Y."/>
            <person name="Li R."/>
            <person name="Xu Z."/>
            <person name="Li S."/>
            <person name="Li X."/>
            <person name="Zheng H."/>
            <person name="Cong L."/>
            <person name="Lin L."/>
            <person name="Yin J."/>
            <person name="Geng J."/>
            <person name="Li G."/>
            <person name="Shi J."/>
            <person name="Liu J."/>
            <person name="Lv H."/>
            <person name="Li J."/>
            <person name="Wang J."/>
            <person name="Deng Y."/>
            <person name="Ran L."/>
            <person name="Shi X."/>
            <person name="Wang X."/>
            <person name="Wu Q."/>
            <person name="Li C."/>
            <person name="Ren X."/>
            <person name="Wang J."/>
            <person name="Wang X."/>
            <person name="Li D."/>
            <person name="Liu D."/>
            <person name="Zhang X."/>
            <person name="Ji Z."/>
            <person name="Zhao W."/>
            <person name="Sun Y."/>
            <person name="Zhang Z."/>
            <person name="Bao J."/>
            <person name="Han Y."/>
            <person name="Dong L."/>
            <person name="Ji J."/>
            <person name="Chen P."/>
            <person name="Wu S."/>
            <person name="Liu J."/>
            <person name="Xiao Y."/>
            <person name="Bu D."/>
            <person name="Tan J."/>
            <person name="Yang L."/>
            <person name="Ye C."/>
            <person name="Zhang J."/>
            <person name="Xu J."/>
            <person name="Zhou Y."/>
            <person name="Yu Y."/>
            <person name="Zhang B."/>
            <person name="Zhuang S."/>
            <person name="Wei H."/>
            <person name="Liu B."/>
            <person name="Lei M."/>
            <person name="Yu H."/>
            <person name="Li Y."/>
            <person name="Xu H."/>
            <person name="Wei S."/>
            <person name="He X."/>
            <person name="Fang L."/>
            <person name="Zhang Z."/>
            <person name="Zhang Y."/>
            <person name="Huang X."/>
            <person name="Su Z."/>
            <person name="Tong W."/>
            <person name="Li J."/>
            <person name="Tong Z."/>
            <person name="Li S."/>
            <person name="Ye J."/>
            <person name="Wang L."/>
            <person name="Fang L."/>
            <person name="Lei T."/>
            <person name="Chen C.-S."/>
            <person name="Chen H.-C."/>
            <person name="Xu Z."/>
            <person name="Li H."/>
            <person name="Huang H."/>
            <person name="Zhang F."/>
            <person name="Xu H."/>
            <person name="Li N."/>
            <person name="Zhao C."/>
            <person name="Li S."/>
            <person name="Dong L."/>
            <person name="Huang Y."/>
            <person name="Li L."/>
            <person name="Xi Y."/>
            <person name="Qi Q."/>
            <person name="Li W."/>
            <person name="Zhang B."/>
            <person name="Hu W."/>
            <person name="Zhang Y."/>
            <person name="Tian X."/>
            <person name="Jiao Y."/>
            <person name="Liang X."/>
            <person name="Jin J."/>
            <person name="Gao L."/>
            <person name="Zheng W."/>
            <person name="Hao B."/>
            <person name="Liu S.-M."/>
            <person name="Wang W."/>
            <person name="Yuan L."/>
            <person name="Cao M."/>
            <person name="McDermott J."/>
            <person name="Samudrala R."/>
            <person name="Wang J."/>
            <person name="Wong G.K.-S."/>
            <person name="Yang H."/>
        </authorList>
    </citation>
    <scope>NUCLEOTIDE SEQUENCE [LARGE SCALE GENOMIC DNA]</scope>
    <source>
        <strain>cv. Nipponbare</strain>
    </source>
</reference>
<reference key="7">
    <citation type="journal article" date="2003" name="Science">
        <title>Collection, mapping, and annotation of over 28,000 cDNA clones from japonica rice.</title>
        <authorList>
            <consortium name="The rice full-length cDNA consortium"/>
        </authorList>
    </citation>
    <scope>NUCLEOTIDE SEQUENCE [LARGE SCALE MRNA]</scope>
    <source>
        <strain>cv. Nipponbare</strain>
    </source>
</reference>
<keyword id="KW-0025">Alternative splicing</keyword>
<keyword id="KW-0256">Endoplasmic reticulum</keyword>
<keyword id="KW-0325">Glycoprotein</keyword>
<keyword id="KW-0333">Golgi apparatus</keyword>
<keyword id="KW-0378">Hydrolase</keyword>
<keyword id="KW-1185">Reference proteome</keyword>
<keyword id="KW-0964">Secreted</keyword>
<keyword id="KW-0732">Signal</keyword>